<feature type="chain" id="PRO_0000046932" description="Zinc finger protein basonuclin-1">
    <location>
        <begin position="1"/>
        <end position="994"/>
    </location>
</feature>
<feature type="zinc finger region" description="C2H2-type 1" evidence="2">
    <location>
        <begin position="357"/>
        <end position="380"/>
    </location>
</feature>
<feature type="zinc finger region" description="C2H2-type 2" evidence="2">
    <location>
        <begin position="385"/>
        <end position="414"/>
    </location>
</feature>
<feature type="zinc finger region" description="C2H2-type 3" evidence="2">
    <location>
        <begin position="720"/>
        <end position="743"/>
    </location>
</feature>
<feature type="zinc finger region" description="C2H2-type 4" evidence="2">
    <location>
        <begin position="748"/>
        <end position="775"/>
    </location>
</feature>
<feature type="zinc finger region" description="C2H2-type 5" evidence="2">
    <location>
        <begin position="928"/>
        <end position="951"/>
    </location>
</feature>
<feature type="zinc finger region" description="C2H2-type 6" evidence="2">
    <location>
        <begin position="956"/>
        <end position="983"/>
    </location>
</feature>
<feature type="region of interest" description="Disordered" evidence="3">
    <location>
        <begin position="1"/>
        <end position="29"/>
    </location>
</feature>
<feature type="region of interest" description="Hydrophobic">
    <location>
        <begin position="240"/>
        <end position="249"/>
    </location>
</feature>
<feature type="region of interest" description="Disordered" evidence="3">
    <location>
        <begin position="402"/>
        <end position="425"/>
    </location>
</feature>
<feature type="region of interest" description="Disordered" evidence="3">
    <location>
        <begin position="444"/>
        <end position="472"/>
    </location>
</feature>
<feature type="region of interest" description="Disordered" evidence="3">
    <location>
        <begin position="555"/>
        <end position="639"/>
    </location>
</feature>
<feature type="region of interest" description="Disordered" evidence="3">
    <location>
        <begin position="859"/>
        <end position="881"/>
    </location>
</feature>
<feature type="region of interest" description="Disordered" evidence="3">
    <location>
        <begin position="970"/>
        <end position="994"/>
    </location>
</feature>
<feature type="short sequence motif" description="Nuclear localization signal" evidence="7">
    <location>
        <begin position="533"/>
        <end position="539"/>
    </location>
</feature>
<feature type="compositionally biased region" description="Acidic residues" evidence="3">
    <location>
        <begin position="563"/>
        <end position="578"/>
    </location>
</feature>
<feature type="compositionally biased region" description="Basic and acidic residues" evidence="3">
    <location>
        <begin position="603"/>
        <end position="614"/>
    </location>
</feature>
<feature type="compositionally biased region" description="Polar residues" evidence="3">
    <location>
        <begin position="615"/>
        <end position="630"/>
    </location>
</feature>
<feature type="compositionally biased region" description="Low complexity" evidence="3">
    <location>
        <begin position="859"/>
        <end position="877"/>
    </location>
</feature>
<feature type="modified residue" description="Phosphoserine" evidence="7">
    <location>
        <position position="537"/>
    </location>
</feature>
<feature type="modified residue" description="Phosphoserine" evidence="7">
    <location>
        <position position="541"/>
    </location>
</feature>
<feature type="sequence variant" id="VAR_083487" description="In POF16; uncertain significance; affects nuclear localization; the mutant exhibits a punctate localization in the nucleus; dbSNP:rs149100994." evidence="5">
    <original>L</original>
    <variation>P</variation>
    <location>
        <position position="532"/>
    </location>
</feature>
<feature type="mutagenesis site" description="No effect on phosphorylation. Abolishes phosphorylation and induces nuclear restriction; when associated with A-541." evidence="7">
    <original>S</original>
    <variation>A</variation>
    <location>
        <position position="537"/>
    </location>
</feature>
<feature type="mutagenesis site" description="Reduces phosphorylation and induces partial relocation into the cytoplasm." evidence="7">
    <original>S</original>
    <variation>D</variation>
    <location>
        <position position="537"/>
    </location>
</feature>
<feature type="mutagenesis site" description="No effect on phosphorylation, no effect on subcellular location." evidence="7">
    <original>S</original>
    <variation>D</variation>
    <location>
        <position position="540"/>
    </location>
</feature>
<feature type="mutagenesis site" description="Strongly reduces phosphorylation. Abolishes phosphorylation and induces nuclear restriction; when associated with A-537." evidence="7">
    <original>S</original>
    <variation>A</variation>
    <location>
        <position position="541"/>
    </location>
</feature>
<feature type="mutagenesis site" description="Strongly reduces phosphorylation and induces partial relocation into the cytoplasm." evidence="7">
    <original>S</original>
    <variation>D</variation>
    <location>
        <position position="541"/>
    </location>
</feature>
<feature type="sequence conflict" description="In Ref. 1; AAA35584." evidence="9" ref="1">
    <original>PSRGGRGAA</original>
    <variation>EPGRTRGG</variation>
    <location>
        <begin position="6"/>
        <end position="14"/>
    </location>
</feature>
<feature type="sequence conflict" description="In Ref. 1; AAA35584." evidence="9" ref="1">
    <original>S</original>
    <variation>C</variation>
    <location>
        <position position="156"/>
    </location>
</feature>
<feature type="sequence conflict" description="In Ref. 1; AAA35584." evidence="9" ref="1">
    <original>F</original>
    <variation>N</variation>
    <location>
        <position position="284"/>
    </location>
</feature>
<feature type="sequence conflict" description="In Ref. 1; AAA35584." evidence="9" ref="1">
    <original>S</original>
    <variation>T</variation>
    <location>
        <position position="401"/>
    </location>
</feature>
<feature type="sequence conflict" description="In Ref. 1; AAA35584." evidence="9" ref="1">
    <original>Q</original>
    <variation>H</variation>
    <location>
        <position position="638"/>
    </location>
</feature>
<protein>
    <recommendedName>
        <fullName>Zinc finger protein basonuclin-1</fullName>
    </recommendedName>
</protein>
<sequence length="994" mass="110972">MRRRPPSRGGRGAARARETRRQPRHRSGRRMAEAISCTLNCSCQSFKPGKINHRQCDQCKHGWVAHALSKLRIPPMYPTSQVEIVQSNVVFDISSLMLYGTQAIPVRLKILLDRLFSVLKQDEVLQILHALDWTLQDYIRGYVLQDASGKVLDHWSIMTSEEEVATLQQFLRFGETKSIVELMAIQEKEEQSIIIPPSTANVDIRAFIESCSHRSSSLPTPVDKGNPSSIHPFENLISNMTFMLPFQFFNPLPPALIGSLPEQYMLEQGHDQSQDPKQEVHGPFPDSSFLTSSSTPFQVEKDQCLNCPDAITKKEDSTHLSDSSSYNIVTKFERTQLSPEAKVKPERNSLGTKKGRVFCTACEKTFYDKGTLKIHYNAVHLKIKHKCTIEGCNMVFSSLRSRNRHSANPNPRLHMPMNRNNRDKDLRNSLNLASSENYKCPGFTVTSPDCRPPPSYPGSGEDSKGQPAFPNIGQNGVLFPNLKTVQPVLPFYRSPATPAEVANTPGILPSLPLLSSSIPEQLISNEMPFDALPKKKSRKSSMPIKIEKEAVEIANEKRHNLSSDEDMPLQVVSEDEQEACSPQSHRVSEEQHVQSGGLGKPFPEGERPCHRESVIESSGAISQTPEQATHNSERETEQTPALIMVPREVEDGGHEHYFTPGMEPQVPFSDYMELQQRLLAGGLFSALSNRGMAFPCLEDSKELEHVGQHALARQIEENRFQCDICKKTFKNACSVKIHHKNMHVKEMHTCTVEGCNATFPSRRSRDRHSSNLNLHQKALSQEALESSEDHFRAAYLLKDVAKEAYQDVAFTQQASQTSVIFKGTSRMGSLVYPITQVHSASLESYNSGPLSEGTILDLSTTSSMKSESSSHSSWDSDGVSEEGTVLMEDSDGNCEGSSLVPGEDEYPICVLMEKADQSLASLPSGLPITCHLCQKTYSNKGTFRAHYKTVHLRQLHKCKVPGCNTMFSSVRSRNRHSQNPNLHKSLASSPSHLQ</sequence>
<organism>
    <name type="scientific">Homo sapiens</name>
    <name type="common">Human</name>
    <dbReference type="NCBI Taxonomy" id="9606"/>
    <lineage>
        <taxon>Eukaryota</taxon>
        <taxon>Metazoa</taxon>
        <taxon>Chordata</taxon>
        <taxon>Craniata</taxon>
        <taxon>Vertebrata</taxon>
        <taxon>Euteleostomi</taxon>
        <taxon>Mammalia</taxon>
        <taxon>Eutheria</taxon>
        <taxon>Euarchontoglires</taxon>
        <taxon>Primates</taxon>
        <taxon>Haplorrhini</taxon>
        <taxon>Catarrhini</taxon>
        <taxon>Hominidae</taxon>
        <taxon>Homo</taxon>
    </lineage>
</organism>
<name>BNC1_HUMAN</name>
<accession>Q01954</accession>
<accession>Q15840</accession>
<keyword id="KW-0963">Cytoplasm</keyword>
<keyword id="KW-0221">Differentiation</keyword>
<keyword id="KW-0225">Disease variant</keyword>
<keyword id="KW-0238">DNA-binding</keyword>
<keyword id="KW-0479">Metal-binding</keyword>
<keyword id="KW-0539">Nucleus</keyword>
<keyword id="KW-0597">Phosphoprotein</keyword>
<keyword id="KW-1066">Premature ovarian failure</keyword>
<keyword id="KW-1267">Proteomics identification</keyword>
<keyword id="KW-1185">Reference proteome</keyword>
<keyword id="KW-0677">Repeat</keyword>
<keyword id="KW-0744">Spermatogenesis</keyword>
<keyword id="KW-0804">Transcription</keyword>
<keyword id="KW-0805">Transcription regulation</keyword>
<keyword id="KW-0862">Zinc</keyword>
<keyword id="KW-0863">Zinc-finger</keyword>
<evidence type="ECO:0000250" key="1">
    <source>
        <dbReference type="UniProtKB" id="O35914"/>
    </source>
</evidence>
<evidence type="ECO:0000255" key="2">
    <source>
        <dbReference type="PROSITE-ProRule" id="PRU00042"/>
    </source>
</evidence>
<evidence type="ECO:0000256" key="3">
    <source>
        <dbReference type="SAM" id="MobiDB-lite"/>
    </source>
</evidence>
<evidence type="ECO:0000269" key="4">
    <source>
    </source>
</evidence>
<evidence type="ECO:0000269" key="5">
    <source>
    </source>
</evidence>
<evidence type="ECO:0000269" key="6">
    <source>
    </source>
</evidence>
<evidence type="ECO:0000269" key="7">
    <source>
    </source>
</evidence>
<evidence type="ECO:0000269" key="8">
    <source>
    </source>
</evidence>
<evidence type="ECO:0000305" key="9"/>
<dbReference type="EMBL" id="L03427">
    <property type="protein sequence ID" value="AAA35584.1"/>
    <property type="molecule type" value="mRNA"/>
</dbReference>
<dbReference type="EMBL" id="U59694">
    <property type="protein sequence ID" value="AAB53028.1"/>
    <property type="molecule type" value="Genomic_DNA"/>
</dbReference>
<dbReference type="EMBL" id="U59692">
    <property type="protein sequence ID" value="AAB53028.1"/>
    <property type="status" value="JOINED"/>
    <property type="molecule type" value="Genomic_DNA"/>
</dbReference>
<dbReference type="EMBL" id="U59693">
    <property type="protein sequence ID" value="AAB53028.1"/>
    <property type="status" value="JOINED"/>
    <property type="molecule type" value="Genomic_DNA"/>
</dbReference>
<dbReference type="CCDS" id="CCDS10324.1"/>
<dbReference type="PIR" id="A46415">
    <property type="entry name" value="A46415"/>
</dbReference>
<dbReference type="RefSeq" id="NP_001288135.1">
    <property type="nucleotide sequence ID" value="NM_001301206.1"/>
</dbReference>
<dbReference type="RefSeq" id="NP_001708.3">
    <property type="nucleotide sequence ID" value="NM_001717.3"/>
</dbReference>
<dbReference type="BioGRID" id="107115">
    <property type="interactions" value="5"/>
</dbReference>
<dbReference type="FunCoup" id="Q01954">
    <property type="interactions" value="2080"/>
</dbReference>
<dbReference type="IntAct" id="Q01954">
    <property type="interactions" value="5"/>
</dbReference>
<dbReference type="STRING" id="9606.ENSP00000307041"/>
<dbReference type="GlyGen" id="Q01954">
    <property type="glycosylation" value="1 site"/>
</dbReference>
<dbReference type="iPTMnet" id="Q01954"/>
<dbReference type="PhosphoSitePlus" id="Q01954"/>
<dbReference type="BioMuta" id="BNC1"/>
<dbReference type="DMDM" id="12644377"/>
<dbReference type="jPOST" id="Q01954"/>
<dbReference type="MassIVE" id="Q01954"/>
<dbReference type="PaxDb" id="9606-ENSP00000307041"/>
<dbReference type="PeptideAtlas" id="Q01954"/>
<dbReference type="ProteomicsDB" id="58015"/>
<dbReference type="Antibodypedia" id="28194">
    <property type="antibodies" value="175 antibodies from 26 providers"/>
</dbReference>
<dbReference type="DNASU" id="646"/>
<dbReference type="Ensembl" id="ENST00000345382.7">
    <property type="protein sequence ID" value="ENSP00000307041.2"/>
    <property type="gene ID" value="ENSG00000169594.14"/>
</dbReference>
<dbReference type="GeneID" id="646"/>
<dbReference type="KEGG" id="hsa:646"/>
<dbReference type="MANE-Select" id="ENST00000345382.7">
    <property type="protein sequence ID" value="ENSP00000307041.2"/>
    <property type="RefSeq nucleotide sequence ID" value="NM_001717.4"/>
    <property type="RefSeq protein sequence ID" value="NP_001708.3"/>
</dbReference>
<dbReference type="UCSC" id="uc002bjt.2">
    <property type="organism name" value="human"/>
</dbReference>
<dbReference type="AGR" id="HGNC:1081"/>
<dbReference type="CTD" id="646"/>
<dbReference type="DisGeNET" id="646"/>
<dbReference type="GeneCards" id="BNC1"/>
<dbReference type="HGNC" id="HGNC:1081">
    <property type="gene designation" value="BNC1"/>
</dbReference>
<dbReference type="HPA" id="ENSG00000169594">
    <property type="expression patterns" value="Tissue enhanced (adipose tissue, esophagus, testis)"/>
</dbReference>
<dbReference type="MalaCards" id="BNC1"/>
<dbReference type="MIM" id="601930">
    <property type="type" value="gene"/>
</dbReference>
<dbReference type="MIM" id="618723">
    <property type="type" value="phenotype"/>
</dbReference>
<dbReference type="neXtProt" id="NX_Q01954"/>
<dbReference type="OpenTargets" id="ENSG00000169594"/>
<dbReference type="Orphanet" id="243">
    <property type="disease" value="46,XX gonadal dysgenesis"/>
</dbReference>
<dbReference type="PharmGKB" id="PA25391"/>
<dbReference type="VEuPathDB" id="HostDB:ENSG00000169594"/>
<dbReference type="eggNOG" id="ENOG502QR8N">
    <property type="taxonomic scope" value="Eukaryota"/>
</dbReference>
<dbReference type="GeneTree" id="ENSGT00390000005844"/>
<dbReference type="InParanoid" id="Q01954"/>
<dbReference type="OMA" id="MEPRVPF"/>
<dbReference type="OrthoDB" id="10070972at2759"/>
<dbReference type="PAN-GO" id="Q01954">
    <property type="GO annotations" value="2 GO annotations based on evolutionary models"/>
</dbReference>
<dbReference type="PhylomeDB" id="Q01954"/>
<dbReference type="TreeFam" id="TF350399"/>
<dbReference type="PathwayCommons" id="Q01954"/>
<dbReference type="SignaLink" id="Q01954"/>
<dbReference type="SIGNOR" id="Q01954"/>
<dbReference type="BioGRID-ORCS" id="646">
    <property type="hits" value="9 hits in 1151 CRISPR screens"/>
</dbReference>
<dbReference type="GeneWiki" id="BNC1"/>
<dbReference type="GenomeRNAi" id="646"/>
<dbReference type="Pharos" id="Q01954">
    <property type="development level" value="Tbio"/>
</dbReference>
<dbReference type="PRO" id="PR:Q01954"/>
<dbReference type="Proteomes" id="UP000005640">
    <property type="component" value="Chromosome 15"/>
</dbReference>
<dbReference type="RNAct" id="Q01954">
    <property type="molecule type" value="protein"/>
</dbReference>
<dbReference type="Bgee" id="ENSG00000169594">
    <property type="expression patterns" value="Expressed in germinal epithelium of ovary and 79 other cell types or tissues"/>
</dbReference>
<dbReference type="ExpressionAtlas" id="Q01954">
    <property type="expression patterns" value="baseline and differential"/>
</dbReference>
<dbReference type="GO" id="GO:0005737">
    <property type="term" value="C:cytoplasm"/>
    <property type="evidence" value="ECO:0007669"/>
    <property type="project" value="UniProtKB-SubCell"/>
</dbReference>
<dbReference type="GO" id="GO:0005730">
    <property type="term" value="C:nucleolus"/>
    <property type="evidence" value="ECO:0000250"/>
    <property type="project" value="ARUK-UCL"/>
</dbReference>
<dbReference type="GO" id="GO:0005654">
    <property type="term" value="C:nucleoplasm"/>
    <property type="evidence" value="ECO:0000314"/>
    <property type="project" value="HPA"/>
</dbReference>
<dbReference type="GO" id="GO:0005634">
    <property type="term" value="C:nucleus"/>
    <property type="evidence" value="ECO:0000314"/>
    <property type="project" value="UniProtKB"/>
</dbReference>
<dbReference type="GO" id="GO:0001216">
    <property type="term" value="F:DNA-binding transcription activator activity"/>
    <property type="evidence" value="ECO:0000314"/>
    <property type="project" value="ARUK-UCL"/>
</dbReference>
<dbReference type="GO" id="GO:0000182">
    <property type="term" value="F:rDNA binding"/>
    <property type="evidence" value="ECO:0000314"/>
    <property type="project" value="ARUK-UCL"/>
</dbReference>
<dbReference type="GO" id="GO:0008270">
    <property type="term" value="F:zinc ion binding"/>
    <property type="evidence" value="ECO:0007669"/>
    <property type="project" value="UniProtKB-KW"/>
</dbReference>
<dbReference type="GO" id="GO:0030154">
    <property type="term" value="P:cell differentiation"/>
    <property type="evidence" value="ECO:0007669"/>
    <property type="project" value="UniProtKB-KW"/>
</dbReference>
<dbReference type="GO" id="GO:0008544">
    <property type="term" value="P:epidermis development"/>
    <property type="evidence" value="ECO:0000304"/>
    <property type="project" value="ProtInc"/>
</dbReference>
<dbReference type="GO" id="GO:0008284">
    <property type="term" value="P:positive regulation of cell population proliferation"/>
    <property type="evidence" value="ECO:0000304"/>
    <property type="project" value="ProtInc"/>
</dbReference>
<dbReference type="GO" id="GO:1900195">
    <property type="term" value="P:positive regulation of oocyte maturation"/>
    <property type="evidence" value="ECO:0000315"/>
    <property type="project" value="UniProtKB"/>
</dbReference>
<dbReference type="GO" id="GO:0045943">
    <property type="term" value="P:positive regulation of transcription by RNA polymerase I"/>
    <property type="evidence" value="ECO:0000314"/>
    <property type="project" value="ARUK-UCL"/>
</dbReference>
<dbReference type="GO" id="GO:0006356">
    <property type="term" value="P:regulation of transcription by RNA polymerase I"/>
    <property type="evidence" value="ECO:0000318"/>
    <property type="project" value="GO_Central"/>
</dbReference>
<dbReference type="GO" id="GO:0007283">
    <property type="term" value="P:spermatogenesis"/>
    <property type="evidence" value="ECO:0007669"/>
    <property type="project" value="UniProtKB-KW"/>
</dbReference>
<dbReference type="FunFam" id="3.30.160.60:FF:000691">
    <property type="entry name" value="Zinc finger protein basonuclin-1"/>
    <property type="match status" value="2"/>
</dbReference>
<dbReference type="Gene3D" id="3.30.160.60">
    <property type="entry name" value="Classic Zinc Finger"/>
    <property type="match status" value="3"/>
</dbReference>
<dbReference type="InterPro" id="IPR040436">
    <property type="entry name" value="Disconnected-like"/>
</dbReference>
<dbReference type="InterPro" id="IPR036236">
    <property type="entry name" value="Znf_C2H2_sf"/>
</dbReference>
<dbReference type="InterPro" id="IPR013087">
    <property type="entry name" value="Znf_C2H2_type"/>
</dbReference>
<dbReference type="PANTHER" id="PTHR15021">
    <property type="entry name" value="DISCONNECTED-RELATED"/>
    <property type="match status" value="1"/>
</dbReference>
<dbReference type="PANTHER" id="PTHR15021:SF1">
    <property type="entry name" value="ZINC FINGER PROTEIN BASONUCLIN-1"/>
    <property type="match status" value="1"/>
</dbReference>
<dbReference type="Pfam" id="PF00096">
    <property type="entry name" value="zf-C2H2"/>
    <property type="match status" value="1"/>
</dbReference>
<dbReference type="Pfam" id="PF12874">
    <property type="entry name" value="zf-met"/>
    <property type="match status" value="1"/>
</dbReference>
<dbReference type="SMART" id="SM00355">
    <property type="entry name" value="ZnF_C2H2"/>
    <property type="match status" value="6"/>
</dbReference>
<dbReference type="SUPFAM" id="SSF57667">
    <property type="entry name" value="beta-beta-alpha zinc fingers"/>
    <property type="match status" value="1"/>
</dbReference>
<dbReference type="PROSITE" id="PS00028">
    <property type="entry name" value="ZINC_FINGER_C2H2_1"/>
    <property type="match status" value="3"/>
</dbReference>
<dbReference type="PROSITE" id="PS50157">
    <property type="entry name" value="ZINC_FINGER_C2H2_2"/>
    <property type="match status" value="3"/>
</dbReference>
<comment type="function">
    <text evidence="1 5 6">Transcriptional activator (By similarity). It is likely involved in the regulation of keratinocytes terminal differentiation in squamous epithelia and hair follicles (PubMed:8034748). Required for the maintenance of spermatogenesis (By similarity). It is involved in the positive regulation of oocyte maturation, probably acting through the control of BMP15 levels and regulation of AKT signaling cascade (PubMed:30010909). May also play a role in the early development of embryos (By similarity).</text>
</comment>
<comment type="subunit">
    <text evidence="1">Interacts with HSF2BP (via C-terminus).</text>
</comment>
<comment type="subcellular location">
    <subcellularLocation>
        <location evidence="4 5 6 7">Nucleus</location>
    </subcellularLocation>
    <subcellularLocation>
        <location evidence="7">Cytoplasm</location>
    </subcellularLocation>
    <subcellularLocation>
        <location evidence="4">Nucleus</location>
        <location evidence="4">Nucleoplasm</location>
    </subcellularLocation>
    <text evidence="1">Relocates to the midpiece of the flagellum during late spermiogenesis in spermatids.</text>
</comment>
<comment type="tissue specificity">
    <text evidence="4 5 6 8">In epidermis, primarily detected in cells of the basal or immediately suprabasal layers (at protein level) (PubMed:16891417). In hair follicles, mainly expressed in the outer root sheath (at protein level) (PubMed:8034748). Expressed in epidermis, testis and foreskin, and to a lower extent in thymus, spleen, mammary glands, placenta, brain and heart (PubMed:9687312). Expressed in the ovary, notably in oocytes (PubMed:30010909).</text>
</comment>
<comment type="PTM">
    <text evidence="7">Phosphorylation on Ser-537 and Ser-541 leads to cytoplasmic localization.</text>
</comment>
<comment type="disease" evidence="5">
    <disease id="DI-05724">
        <name>Premature ovarian failure 16</name>
        <acronym>POF16</acronym>
        <description>An autosomal dominant form of premature ovarian failure, an ovarian disorder defined as the cessation of ovarian function under the age of 40 years. It is characterized by oligomenorrhea or amenorrhea, in the presence of elevated levels of serum gonadotropins and low estradiol.</description>
        <dbReference type="MIM" id="618723"/>
    </disease>
    <text>The disease may be caused by variants affecting the gene represented in this entry.</text>
</comment>
<gene>
    <name type="primary">BNC1</name>
    <name type="synonym">BNC</name>
</gene>
<proteinExistence type="evidence at protein level"/>
<reference key="1">
    <citation type="journal article" date="1992" name="Proc. Natl. Acad. Sci. U.S.A.">
        <title>Basonuclin: a keratinocyte protein with multiple paired zinc fingers.</title>
        <authorList>
            <person name="Tseng H."/>
            <person name="Green H."/>
        </authorList>
    </citation>
    <scope>NUCLEOTIDE SEQUENCE [MRNA]</scope>
    <source>
        <tissue>Keratinocyte</tissue>
    </source>
</reference>
<reference key="2">
    <citation type="journal article" date="1997" name="Gene">
        <title>The human basonuclin gene.</title>
        <authorList>
            <person name="Teumer J."/>
            <person name="Tseng H."/>
            <person name="Green H."/>
        </authorList>
    </citation>
    <scope>NUCLEOTIDE SEQUENCE [GENOMIC DNA]</scope>
</reference>
<reference key="3">
    <citation type="journal article" date="1994" name="J. Cell Biol.">
        <title>Association of basonuclin with ability of keratinocytes to multiply and with absence of terminal differentiation.</title>
        <authorList>
            <person name="Tseng H."/>
            <person name="Green H."/>
        </authorList>
    </citation>
    <scope>FUNCTION</scope>
    <scope>SUBCELLULAR LOCATION</scope>
    <scope>TISSUE SPECIFICITY</scope>
</reference>
<reference key="4">
    <citation type="journal article" date="1997" name="Proc. Natl. Acad. Sci. U.S.A.">
        <title>Nuclear localization of basonuclin in human keratinocytes and the role of phosphorylation.</title>
        <authorList>
            <person name="Iuchi S."/>
            <person name="Green H."/>
        </authorList>
    </citation>
    <scope>SUBCELLULAR LOCATION</scope>
    <scope>NUCLEAR LOCALIZATION SIGNAL</scope>
    <scope>PHOSPHORYLATION AT SER-537 AND SER-541</scope>
    <scope>MUTAGENESIS OF SER-537; SER-540 AND SER-541</scope>
</reference>
<reference key="5">
    <citation type="journal article" date="1998" name="Biol. Reprod.">
        <title>Translocation of the zinc finger protein basonuclin from the mouse germ cell nucleus to the midpiece of the spermatozoon during spermiogenesis.</title>
        <authorList>
            <person name="Mahoney M.G."/>
            <person name="Tang W."/>
            <person name="Xiang M.M."/>
            <person name="Moss S.B."/>
            <person name="Gerton G.L."/>
            <person name="Stanley J.R."/>
            <person name="Tseng H."/>
        </authorList>
    </citation>
    <scope>TISSUE SPECIFICITY</scope>
</reference>
<reference key="6">
    <citation type="journal article" date="2006" name="Proc. Natl. Acad. Sci. U.S.A.">
        <title>Basonuclins 1 and 2, whose genes share a common origin, are proteins with widely different properties and functions.</title>
        <authorList>
            <person name="Vanhoutteghem A."/>
            <person name="Djian P."/>
        </authorList>
    </citation>
    <scope>SUBCELLULAR LOCATION</scope>
    <scope>TISSUE SPECIFICITY</scope>
</reference>
<reference key="7">
    <citation type="journal article" date="2018" name="Hum. Mol. Genet.">
        <title>Basonuclin 1 deficiency is a cause of primary ovarian insufficiency.</title>
        <authorList>
            <person name="Zhang D."/>
            <person name="Liu Y."/>
            <person name="Zhang Z."/>
            <person name="Lv P."/>
            <person name="Liu Y."/>
            <person name="Li J."/>
            <person name="Wu Y."/>
            <person name="Zhang R."/>
            <person name="Huang Y."/>
            <person name="Xu G."/>
            <person name="Qian Y."/>
            <person name="Qian Y."/>
            <person name="Chen S."/>
            <person name="Xu C."/>
            <person name="Shen J."/>
            <person name="Zhu L."/>
            <person name="Chen K."/>
            <person name="Zhu B."/>
            <person name="Ye X."/>
            <person name="Mao Y."/>
            <person name="Bo X."/>
            <person name="Zhou C."/>
            <person name="Wang T."/>
            <person name="Chen D."/>
            <person name="Yang W."/>
            <person name="Tan Y."/>
            <person name="Song Y."/>
            <person name="Zhou D."/>
            <person name="Sheng J."/>
            <person name="Gao H."/>
            <person name="Zhu Y."/>
            <person name="Li M."/>
            <person name="Wu L."/>
            <person name="He L."/>
            <person name="Huang H."/>
        </authorList>
    </citation>
    <scope>FUNCTION</scope>
    <scope>SUBCELLULAR LOCATION</scope>
    <scope>TISSUE SPECIFICITY</scope>
    <scope>INVOLVEMENT IN POF16</scope>
    <scope>VARIANT POF16 PRO-532</scope>
    <scope>CHARACTERIZATION OF VARIANT POF16 PRO-532</scope>
</reference>